<sequence>MSGELWITLVDTADIVGVTLTFCVNIVLLGLLKTRGKNLGTYKYLMAFFSVFSIFYAIIEFILRPIMHIENTTFFLISRKRFNYSTKLGKINSAFYCACFATSFVVSGVHFVYRYFATCKPNLLRLFNLPTLLLWPLGCSVPVTMWASVSYFLYPDTEYTEAAVTNVLNNHYNWIKKENVSYIAYVYYQYENGVRHIYLKNLLGCFVHYFVMSMTFVVMFYCGYATWKTMNEHKDVSDRTRALQKQLFKALVLQTLIPTIFMYAPTGVMFIAPFFDVNLNANANFIVFCSFLYPGLDPLILILIIRDFRRTIFNFLCGKKNSVDESRSTTRANLSQVPT</sequence>
<protein>
    <recommendedName>
        <fullName>Serpentine receptor class r-10</fullName>
    </recommendedName>
    <alternativeName>
        <fullName>Odorant response abnormal protein 10</fullName>
    </alternativeName>
    <alternativeName>
        <fullName>Olfactory receptor 10</fullName>
    </alternativeName>
</protein>
<comment type="function">
    <text evidence="2 6">An odorant receptor which affects chemotaxis to the volatile odorant diacetyl. Specifies AWA neuronal cell fate via the odr-7 pathway.</text>
</comment>
<comment type="subunit">
    <text evidence="3">Interacts with odr-4.</text>
</comment>
<comment type="subcellular location">
    <subcellularLocation>
        <location evidence="3 4 6">Cell projection</location>
        <location evidence="3 4 6">Cilium membrane</location>
        <topology evidence="3 6">Multi-pass membrane protein</topology>
    </subcellularLocation>
</comment>
<comment type="tissue specificity">
    <text evidence="3 4 6">Strongly expressed in the sensory cilia of AWA olfactory neurons, and at low levels in the CEP neurons.</text>
</comment>
<comment type="developmental stage">
    <text evidence="5">Expressed in AWA olfactory neurons at the L3 larval stage in males and hermaphrodites, but expressed decreases in males from the L4 stage to adulthood.</text>
</comment>
<comment type="induction">
    <text evidence="6">Induced upon exposure to the volatile odorant diacetyl.</text>
</comment>
<comment type="disruption phenotype">
    <text evidence="6">Defective response to diacetyl with wild-type response exhibited to other ketones and odorants sensed by AWA.</text>
</comment>
<comment type="similarity">
    <text evidence="1">Belongs to the nematode receptor-like protein str family.</text>
</comment>
<dbReference type="EMBL" id="U49449">
    <property type="protein sequence ID" value="AAB00117.1"/>
    <property type="molecule type" value="mRNA"/>
</dbReference>
<dbReference type="EMBL" id="FJ455649">
    <property type="protein sequence ID" value="ACQ44039.1"/>
    <property type="molecule type" value="Genomic_DNA"/>
</dbReference>
<dbReference type="EMBL" id="FJ455650">
    <property type="protein sequence ID" value="ACQ44040.1"/>
    <property type="molecule type" value="Genomic_DNA"/>
</dbReference>
<dbReference type="EMBL" id="FJ455651">
    <property type="protein sequence ID" value="ACQ44041.1"/>
    <property type="molecule type" value="Genomic_DNA"/>
</dbReference>
<dbReference type="EMBL" id="FJ455652">
    <property type="protein sequence ID" value="ACQ44042.1"/>
    <property type="molecule type" value="Genomic_DNA"/>
</dbReference>
<dbReference type="EMBL" id="FJ455653">
    <property type="protein sequence ID" value="ACQ44043.1"/>
    <property type="molecule type" value="Genomic_DNA"/>
</dbReference>
<dbReference type="EMBL" id="FJ455654">
    <property type="protein sequence ID" value="ACQ44044.1"/>
    <property type="molecule type" value="Genomic_DNA"/>
</dbReference>
<dbReference type="EMBL" id="FJ455655">
    <property type="protein sequence ID" value="ACQ44045.1"/>
    <property type="molecule type" value="Genomic_DNA"/>
</dbReference>
<dbReference type="EMBL" id="FJ455656">
    <property type="protein sequence ID" value="ACQ44046.1"/>
    <property type="molecule type" value="Genomic_DNA"/>
</dbReference>
<dbReference type="EMBL" id="FJ455657">
    <property type="protein sequence ID" value="ACQ44047.1"/>
    <property type="molecule type" value="Genomic_DNA"/>
</dbReference>
<dbReference type="EMBL" id="FJ455658">
    <property type="protein sequence ID" value="ACQ44048.1"/>
    <property type="molecule type" value="Genomic_DNA"/>
</dbReference>
<dbReference type="EMBL" id="FJ455659">
    <property type="protein sequence ID" value="ACQ44049.1"/>
    <property type="molecule type" value="Genomic_DNA"/>
</dbReference>
<dbReference type="EMBL" id="FJ455660">
    <property type="protein sequence ID" value="ACQ44050.1"/>
    <property type="molecule type" value="Genomic_DNA"/>
</dbReference>
<dbReference type="EMBL" id="BX284606">
    <property type="protein sequence ID" value="CCD67888.1"/>
    <property type="molecule type" value="Genomic_DNA"/>
</dbReference>
<dbReference type="PIR" id="T28806">
    <property type="entry name" value="T28806"/>
</dbReference>
<dbReference type="RefSeq" id="NP_509157.1">
    <property type="nucleotide sequence ID" value="NM_076756.5"/>
</dbReference>
<dbReference type="SMR" id="Q18807"/>
<dbReference type="BioGRID" id="45887">
    <property type="interactions" value="5"/>
</dbReference>
<dbReference type="FunCoup" id="Q18807">
    <property type="interactions" value="7"/>
</dbReference>
<dbReference type="STRING" id="6239.C53B7.5.1"/>
<dbReference type="TCDB" id="9.A.14.24.1">
    <property type="family name" value="the g-protein-coupled receptor (gpcr) family"/>
</dbReference>
<dbReference type="GlyCosmos" id="Q18807">
    <property type="glycosylation" value="3 sites, No reported glycans"/>
</dbReference>
<dbReference type="PaxDb" id="6239-C53B7.5"/>
<dbReference type="EnsemblMetazoa" id="C53B7.5.1">
    <property type="protein sequence ID" value="C53B7.5.1"/>
    <property type="gene ID" value="WBGene00003856"/>
</dbReference>
<dbReference type="GeneID" id="180959"/>
<dbReference type="KEGG" id="cel:CELE_C53B7.5"/>
<dbReference type="UCSC" id="C53B7.5">
    <property type="organism name" value="c. elegans"/>
</dbReference>
<dbReference type="AGR" id="WB:WBGene00003856"/>
<dbReference type="CTD" id="180959"/>
<dbReference type="WormBase" id="C53B7.5">
    <property type="protein sequence ID" value="CE26361"/>
    <property type="gene ID" value="WBGene00003856"/>
    <property type="gene designation" value="odr-10"/>
</dbReference>
<dbReference type="eggNOG" id="ENOG502TFTY">
    <property type="taxonomic scope" value="Eukaryota"/>
</dbReference>
<dbReference type="GeneTree" id="ENSGT00970000196747"/>
<dbReference type="HOGENOM" id="CLU_036335_2_1_1"/>
<dbReference type="InParanoid" id="Q18807"/>
<dbReference type="OMA" id="IFMYAPT"/>
<dbReference type="OrthoDB" id="5823194at2759"/>
<dbReference type="PhylomeDB" id="Q18807"/>
<dbReference type="PRO" id="PR:Q18807"/>
<dbReference type="Proteomes" id="UP000001940">
    <property type="component" value="Chromosome X"/>
</dbReference>
<dbReference type="Bgee" id="WBGene00003856">
    <property type="expression patterns" value="Expressed in larva and 1 other cell type or tissue"/>
</dbReference>
<dbReference type="GO" id="GO:0060170">
    <property type="term" value="C:ciliary membrane"/>
    <property type="evidence" value="ECO:0007669"/>
    <property type="project" value="UniProtKB-SubCell"/>
</dbReference>
<dbReference type="GO" id="GO:0030425">
    <property type="term" value="C:dendrite"/>
    <property type="evidence" value="ECO:0000314"/>
    <property type="project" value="WormBase"/>
</dbReference>
<dbReference type="GO" id="GO:0043025">
    <property type="term" value="C:neuronal cell body"/>
    <property type="evidence" value="ECO:0000314"/>
    <property type="project" value="WormBase"/>
</dbReference>
<dbReference type="GO" id="GO:0097730">
    <property type="term" value="C:non-motile cilium"/>
    <property type="evidence" value="ECO:0000314"/>
    <property type="project" value="WormBase"/>
</dbReference>
<dbReference type="GO" id="GO:1990075">
    <property type="term" value="C:periciliary membrane compartment"/>
    <property type="evidence" value="ECO:0000314"/>
    <property type="project" value="WormBase"/>
</dbReference>
<dbReference type="GO" id="GO:0005886">
    <property type="term" value="C:plasma membrane"/>
    <property type="evidence" value="ECO:0000314"/>
    <property type="project" value="WormBase"/>
</dbReference>
<dbReference type="GO" id="GO:0038022">
    <property type="term" value="F:G protein-coupled olfactory receptor activity"/>
    <property type="evidence" value="ECO:0000314"/>
    <property type="project" value="WormBase"/>
</dbReference>
<dbReference type="GO" id="GO:0004930">
    <property type="term" value="F:G protein-coupled receptor activity"/>
    <property type="evidence" value="ECO:0000255"/>
    <property type="project" value="WormBase"/>
</dbReference>
<dbReference type="GO" id="GO:0001965">
    <property type="term" value="F:G-protein alpha-subunit binding"/>
    <property type="evidence" value="ECO:0000353"/>
    <property type="project" value="WormBase"/>
</dbReference>
<dbReference type="GO" id="GO:0050907">
    <property type="term" value="P:detection of chemical stimulus involved in sensory perception"/>
    <property type="evidence" value="ECO:0000315"/>
    <property type="project" value="WormBase"/>
</dbReference>
<dbReference type="GO" id="GO:0007186">
    <property type="term" value="P:G protein-coupled receptor signaling pathway"/>
    <property type="evidence" value="ECO:0000314"/>
    <property type="project" value="WormBase"/>
</dbReference>
<dbReference type="GO" id="GO:0042048">
    <property type="term" value="P:olfactory behavior"/>
    <property type="evidence" value="ECO:0000314"/>
    <property type="project" value="WormBase"/>
</dbReference>
<dbReference type="GO" id="GO:0050918">
    <property type="term" value="P:positive chemotaxis"/>
    <property type="evidence" value="ECO:0000315"/>
    <property type="project" value="WormBase"/>
</dbReference>
<dbReference type="FunFam" id="1.20.1070.10:FF:000128">
    <property type="entry name" value="Seven TM Receptor"/>
    <property type="match status" value="1"/>
</dbReference>
<dbReference type="Gene3D" id="1.20.1070.10">
    <property type="entry name" value="Rhodopsin 7-helix transmembrane proteins"/>
    <property type="match status" value="1"/>
</dbReference>
<dbReference type="InterPro" id="IPR019428">
    <property type="entry name" value="7TM_GPCR_serpentine_rcpt_Str"/>
</dbReference>
<dbReference type="PANTHER" id="PTHR22943">
    <property type="entry name" value="7-TRANSMEMBRANE DOMAIN RECEPTOR C.ELEGANS"/>
    <property type="match status" value="1"/>
</dbReference>
<dbReference type="PANTHER" id="PTHR22943:SF116">
    <property type="entry name" value="SERPENTINE RECEPTOR CLASS R-10"/>
    <property type="match status" value="1"/>
</dbReference>
<dbReference type="Pfam" id="PF10326">
    <property type="entry name" value="7TM_GPCR_Str"/>
    <property type="match status" value="1"/>
</dbReference>
<dbReference type="SUPFAM" id="SSF81321">
    <property type="entry name" value="Family A G protein-coupled receptor-like"/>
    <property type="match status" value="1"/>
</dbReference>
<name>ODR10_CAEEL</name>
<evidence type="ECO:0000255" key="1"/>
<evidence type="ECO:0000269" key="2">
    <source>
    </source>
</evidence>
<evidence type="ECO:0000269" key="3">
    <source>
    </source>
</evidence>
<evidence type="ECO:0000269" key="4">
    <source>
    </source>
</evidence>
<evidence type="ECO:0000269" key="5">
    <source>
    </source>
</evidence>
<evidence type="ECO:0000269" key="6">
    <source>
    </source>
</evidence>
<evidence type="ECO:0000305" key="7"/>
<evidence type="ECO:0000312" key="8">
    <source>
        <dbReference type="EMBL" id="AAB00117.1"/>
    </source>
</evidence>
<evidence type="ECO:0000312" key="9">
    <source>
        <dbReference type="EMBL" id="ACQ44039.1"/>
    </source>
</evidence>
<evidence type="ECO:0000312" key="10">
    <source>
        <dbReference type="EMBL" id="ACQ44040.1"/>
    </source>
</evidence>
<evidence type="ECO:0000312" key="11">
    <source>
        <dbReference type="EMBL" id="ACQ44041.1"/>
    </source>
</evidence>
<evidence type="ECO:0000312" key="12">
    <source>
        <dbReference type="EMBL" id="ACQ44042.1"/>
    </source>
</evidence>
<evidence type="ECO:0000312" key="13">
    <source>
        <dbReference type="EMBL" id="ACQ44043.1"/>
    </source>
</evidence>
<evidence type="ECO:0000312" key="14">
    <source>
        <dbReference type="EMBL" id="ACQ44044.1"/>
    </source>
</evidence>
<evidence type="ECO:0000312" key="15">
    <source>
        <dbReference type="EMBL" id="ACQ44045.1"/>
    </source>
</evidence>
<evidence type="ECO:0000312" key="16">
    <source>
        <dbReference type="EMBL" id="ACQ44046.1"/>
    </source>
</evidence>
<evidence type="ECO:0000312" key="17">
    <source>
        <dbReference type="EMBL" id="ACQ44047.1"/>
    </source>
</evidence>
<evidence type="ECO:0000312" key="18">
    <source>
        <dbReference type="EMBL" id="ACQ44048.1"/>
    </source>
</evidence>
<evidence type="ECO:0000312" key="19">
    <source>
        <dbReference type="EMBL" id="ACQ44049.1"/>
    </source>
</evidence>
<evidence type="ECO:0000312" key="20">
    <source>
        <dbReference type="EMBL" id="ACQ44050.1"/>
    </source>
</evidence>
<evidence type="ECO:0000312" key="21">
    <source>
        <dbReference type="WormBase" id="C53B7.5"/>
    </source>
</evidence>
<accession>Q18807</accession>
<accession>Q17376</accession>
<keyword id="KW-1003">Cell membrane</keyword>
<keyword id="KW-0966">Cell projection</keyword>
<keyword id="KW-0145">Chemotaxis</keyword>
<keyword id="KW-0969">Cilium</keyword>
<keyword id="KW-0325">Glycoprotein</keyword>
<keyword id="KW-0472">Membrane</keyword>
<keyword id="KW-0552">Olfaction</keyword>
<keyword id="KW-0675">Receptor</keyword>
<keyword id="KW-1185">Reference proteome</keyword>
<keyword id="KW-0716">Sensory transduction</keyword>
<keyword id="KW-0812">Transmembrane</keyword>
<keyword id="KW-1133">Transmembrane helix</keyword>
<reference evidence="7 8" key="1">
    <citation type="journal article" date="1996" name="Cell">
        <title>odr-10 encodes a seven transmembrane domain olfactory receptor required for responses to the odorant diacetyl.</title>
        <authorList>
            <person name="Sengupta P."/>
            <person name="Chou J.H."/>
            <person name="Bargmann C.I."/>
        </authorList>
    </citation>
    <scope>NUCLEOTIDE SEQUENCE [MRNA]</scope>
    <scope>FUNCTION</scope>
    <scope>SUBCELLULAR LOCATION</scope>
    <scope>TISSUE SPECIFICITY</scope>
    <scope>INDUCTION</scope>
    <scope>DISRUPTION PHENOTYPE</scope>
    <scope>MUTAGENESIS OF HIS-110</scope>
    <source>
        <strain evidence="6">Bristol N2</strain>
    </source>
</reference>
<reference evidence="9" key="2">
    <citation type="journal article" date="2009" name="Genetics">
        <title>High nucleotide divergence in developmental regulatory genes contrasts with the structural elements of olfactory pathways in caenorhabditis.</title>
        <authorList>
            <person name="Jovelin R."/>
            <person name="Dunham J.P."/>
            <person name="Sung F.S."/>
            <person name="Phillips P.C."/>
        </authorList>
    </citation>
    <scope>NUCLEOTIDE SEQUENCE [GENOMIC DNA]</scope>
    <source>
        <strain evidence="9">AB3</strain>
        <strain evidence="10">BO</strain>
        <strain evidence="20">CB4855</strain>
        <strain evidence="11">CB4856</strain>
        <strain evidence="12">CB4857</strain>
        <strain evidence="13">CB4932</strain>
        <strain evidence="19">DH424</strain>
        <strain evidence="15">PX174</strain>
        <strain evidence="14">PX178</strain>
        <strain evidence="16">PX179</strain>
        <strain evidence="17">RC301</strain>
        <strain evidence="18">TR403</strain>
    </source>
</reference>
<reference key="3">
    <citation type="journal article" date="1998" name="Science">
        <title>Genome sequence of the nematode C. elegans: a platform for investigating biology.</title>
        <authorList>
            <consortium name="The C. elegans sequencing consortium"/>
        </authorList>
    </citation>
    <scope>NUCLEOTIDE SEQUENCE [LARGE SCALE GENOMIC DNA]</scope>
    <source>
        <strain>Bristol N2</strain>
    </source>
</reference>
<reference evidence="7" key="4">
    <citation type="journal article" date="1999" name="Genes Dev.">
        <title>Alternative olfactory neuron fates are specified by the LIM homeobox gene lim-4.</title>
        <authorList>
            <person name="Sagasti A."/>
            <person name="Hobert O."/>
            <person name="Troemel E.R."/>
            <person name="Ruvkun G."/>
            <person name="Bargmann C.I."/>
        </authorList>
    </citation>
    <scope>FUNCTION</scope>
</reference>
<reference key="5">
    <citation type="journal article" date="2014" name="PLoS Genet.">
        <title>An ER complex of ODR-4 and ODR-8/Ufm1 specific protease 2 promotes GPCR maturation by a Ufm1-independent mechanism.</title>
        <authorList>
            <person name="Chen C."/>
            <person name="Itakura E."/>
            <person name="Weber K.P."/>
            <person name="Hegde R.S."/>
            <person name="de Bono M."/>
        </authorList>
    </citation>
    <scope>INTERACTION WITH ODR-4</scope>
    <scope>SUBCELLULAR LOCATION</scope>
    <scope>TISSUE SPECIFICITY</scope>
</reference>
<reference key="6">
    <citation type="journal article" date="2015" name="Sci. Rep.">
        <title>BBS4 and BBS5 show functional redundancy in the BBSome to regulate the degradative sorting of ciliary sensory receptors.</title>
        <authorList>
            <person name="Xu Q."/>
            <person name="Zhang Y."/>
            <person name="Wei Q."/>
            <person name="Huang Y."/>
            <person name="Li Y."/>
            <person name="Ling K."/>
            <person name="Hu J."/>
        </authorList>
    </citation>
    <scope>SUBCELLULAR LOCATION</scope>
    <scope>TISSUE SPECIFICITY</scope>
</reference>
<reference key="7">
    <citation type="journal article" date="2019" name="Elife">
        <title>The Makorin lep-2 and the lncRNA lep-5 regulate lin-28 to schedule sexual maturation of the C. elegans nervous system.</title>
        <authorList>
            <person name="Lawson H."/>
            <person name="Vuong E."/>
            <person name="Miller R.M."/>
            <person name="Kiontke K."/>
            <person name="Fitch D.H."/>
            <person name="Portman D.S."/>
        </authorList>
    </citation>
    <scope>DEVELOPMENTAL STAGE</scope>
</reference>
<organism>
    <name type="scientific">Caenorhabditis elegans</name>
    <dbReference type="NCBI Taxonomy" id="6239"/>
    <lineage>
        <taxon>Eukaryota</taxon>
        <taxon>Metazoa</taxon>
        <taxon>Ecdysozoa</taxon>
        <taxon>Nematoda</taxon>
        <taxon>Chromadorea</taxon>
        <taxon>Rhabditida</taxon>
        <taxon>Rhabditina</taxon>
        <taxon>Rhabditomorpha</taxon>
        <taxon>Rhabditoidea</taxon>
        <taxon>Rhabditidae</taxon>
        <taxon>Peloderinae</taxon>
        <taxon>Caenorhabditis</taxon>
    </lineage>
</organism>
<feature type="chain" id="PRO_0000391384" description="Serpentine receptor class r-10">
    <location>
        <begin position="1"/>
        <end position="339"/>
    </location>
</feature>
<feature type="topological domain" description="Extracellular" evidence="1">
    <location>
        <begin position="1"/>
        <end position="11"/>
    </location>
</feature>
<feature type="transmembrane region" description="Helical; Name=1" evidence="1">
    <location>
        <begin position="12"/>
        <end position="32"/>
    </location>
</feature>
<feature type="topological domain" description="Cytoplasmic" evidence="1">
    <location>
        <begin position="33"/>
        <end position="42"/>
    </location>
</feature>
<feature type="transmembrane region" description="Helical; Name=2" evidence="1">
    <location>
        <begin position="43"/>
        <end position="63"/>
    </location>
</feature>
<feature type="topological domain" description="Extracellular" evidence="1">
    <location>
        <begin position="64"/>
        <end position="92"/>
    </location>
</feature>
<feature type="transmembrane region" description="Helical; Name=3" evidence="1">
    <location>
        <begin position="93"/>
        <end position="113"/>
    </location>
</feature>
<feature type="topological domain" description="Cytoplasmic" evidence="1">
    <location>
        <begin position="114"/>
        <end position="131"/>
    </location>
</feature>
<feature type="transmembrane region" description="Helical; Name=4" evidence="1">
    <location>
        <begin position="132"/>
        <end position="152"/>
    </location>
</feature>
<feature type="topological domain" description="Extracellular" evidence="1">
    <location>
        <begin position="153"/>
        <end position="201"/>
    </location>
</feature>
<feature type="transmembrane region" description="Helical; Name=5" evidence="1">
    <location>
        <begin position="202"/>
        <end position="222"/>
    </location>
</feature>
<feature type="topological domain" description="Cytoplasmic" evidence="1">
    <location>
        <begin position="223"/>
        <end position="254"/>
    </location>
</feature>
<feature type="transmembrane region" description="Helical; Name=6" evidence="1">
    <location>
        <begin position="255"/>
        <end position="275"/>
    </location>
</feature>
<feature type="topological domain" description="Extracellular" evidence="1">
    <location>
        <begin position="276"/>
        <end position="284"/>
    </location>
</feature>
<feature type="transmembrane region" description="Helical; Name=7" evidence="1">
    <location>
        <begin position="285"/>
        <end position="305"/>
    </location>
</feature>
<feature type="topological domain" description="Cytoplasmic" evidence="1">
    <location>
        <begin position="306"/>
        <end position="339"/>
    </location>
</feature>
<feature type="glycosylation site" description="N-linked (GlcNAc...) asparagine" evidence="1">
    <location>
        <position position="71"/>
    </location>
</feature>
<feature type="glycosylation site" description="N-linked (GlcNAc...) asparagine" evidence="1">
    <location>
        <position position="83"/>
    </location>
</feature>
<feature type="glycosylation site" description="N-linked (GlcNAc...) asparagine" evidence="1">
    <location>
        <position position="179"/>
    </location>
</feature>
<feature type="mutagenesis site" description="Defective in their response to diacetyl but wild type response to other odorants." evidence="6">
    <original>H</original>
    <variation>Y</variation>
    <location>
        <position position="110"/>
    </location>
</feature>
<gene>
    <name evidence="21" type="primary">odr-10</name>
    <name evidence="21" type="ORF">C53B7.5</name>
</gene>
<proteinExistence type="evidence at protein level"/>